<accession>A7N0V8</accession>
<organism>
    <name type="scientific">Vibrio campbellii (strain ATCC BAA-1116)</name>
    <dbReference type="NCBI Taxonomy" id="2902295"/>
    <lineage>
        <taxon>Bacteria</taxon>
        <taxon>Pseudomonadati</taxon>
        <taxon>Pseudomonadota</taxon>
        <taxon>Gammaproteobacteria</taxon>
        <taxon>Vibrionales</taxon>
        <taxon>Vibrionaceae</taxon>
        <taxon>Vibrio</taxon>
    </lineage>
</organism>
<reference key="1">
    <citation type="submission" date="2007-08" db="EMBL/GenBank/DDBJ databases">
        <authorList>
            <consortium name="The Vibrio harveyi Genome Sequencing Project"/>
            <person name="Bassler B."/>
            <person name="Clifton S.W."/>
            <person name="Fulton L."/>
            <person name="Delehaunty K."/>
            <person name="Fronick C."/>
            <person name="Harrison M."/>
            <person name="Markivic C."/>
            <person name="Fulton R."/>
            <person name="Tin-Wollam A.-M."/>
            <person name="Shah N."/>
            <person name="Pepin K."/>
            <person name="Nash W."/>
            <person name="Thiruvilangam P."/>
            <person name="Bhonagiri V."/>
            <person name="Waters C."/>
            <person name="Tu K.C."/>
            <person name="Irgon J."/>
            <person name="Wilson R.K."/>
        </authorList>
    </citation>
    <scope>NUCLEOTIDE SEQUENCE [LARGE SCALE GENOMIC DNA]</scope>
    <source>
        <strain>ATCC BAA-1116 / BB120</strain>
    </source>
</reference>
<dbReference type="EMBL" id="CP000789">
    <property type="protein sequence ID" value="ABU69335.1"/>
    <property type="molecule type" value="Genomic_DNA"/>
</dbReference>
<dbReference type="RefSeq" id="WP_012126592.1">
    <property type="nucleotide sequence ID" value="NC_009783.1"/>
</dbReference>
<dbReference type="SMR" id="A7N0V8"/>
<dbReference type="KEGG" id="vha:VIBHAR_00307"/>
<dbReference type="PATRIC" id="fig|338187.25.peg.2262"/>
<dbReference type="Proteomes" id="UP000008152">
    <property type="component" value="Chromosome I"/>
</dbReference>
<dbReference type="GO" id="GO:0005737">
    <property type="term" value="C:cytoplasm"/>
    <property type="evidence" value="ECO:0007669"/>
    <property type="project" value="UniProtKB-SubCell"/>
</dbReference>
<dbReference type="GO" id="GO:0003677">
    <property type="term" value="F:DNA binding"/>
    <property type="evidence" value="ECO:0007669"/>
    <property type="project" value="UniProtKB-KW"/>
</dbReference>
<dbReference type="GO" id="GO:0009037">
    <property type="term" value="F:tyrosine-based site-specific recombinase activity"/>
    <property type="evidence" value="ECO:0007669"/>
    <property type="project" value="UniProtKB-UniRule"/>
</dbReference>
<dbReference type="GO" id="GO:0051301">
    <property type="term" value="P:cell division"/>
    <property type="evidence" value="ECO:0007669"/>
    <property type="project" value="UniProtKB-KW"/>
</dbReference>
<dbReference type="GO" id="GO:0007059">
    <property type="term" value="P:chromosome segregation"/>
    <property type="evidence" value="ECO:0007669"/>
    <property type="project" value="UniProtKB-UniRule"/>
</dbReference>
<dbReference type="GO" id="GO:0006313">
    <property type="term" value="P:DNA transposition"/>
    <property type="evidence" value="ECO:0007669"/>
    <property type="project" value="UniProtKB-UniRule"/>
</dbReference>
<dbReference type="CDD" id="cd00798">
    <property type="entry name" value="INT_XerDC_C"/>
    <property type="match status" value="1"/>
</dbReference>
<dbReference type="FunFam" id="1.10.443.10:FF:000002">
    <property type="entry name" value="Tyrosine recombinase XerC"/>
    <property type="match status" value="1"/>
</dbReference>
<dbReference type="Gene3D" id="1.10.150.130">
    <property type="match status" value="1"/>
</dbReference>
<dbReference type="Gene3D" id="1.10.443.10">
    <property type="entry name" value="Intergrase catalytic core"/>
    <property type="match status" value="1"/>
</dbReference>
<dbReference type="HAMAP" id="MF_01808">
    <property type="entry name" value="Recomb_XerC_XerD"/>
    <property type="match status" value="1"/>
</dbReference>
<dbReference type="InterPro" id="IPR044068">
    <property type="entry name" value="CB"/>
</dbReference>
<dbReference type="InterPro" id="IPR011010">
    <property type="entry name" value="DNA_brk_join_enz"/>
</dbReference>
<dbReference type="InterPro" id="IPR013762">
    <property type="entry name" value="Integrase-like_cat_sf"/>
</dbReference>
<dbReference type="InterPro" id="IPR002104">
    <property type="entry name" value="Integrase_catalytic"/>
</dbReference>
<dbReference type="InterPro" id="IPR010998">
    <property type="entry name" value="Integrase_recombinase_N"/>
</dbReference>
<dbReference type="InterPro" id="IPR004107">
    <property type="entry name" value="Integrase_SAM-like_N"/>
</dbReference>
<dbReference type="InterPro" id="IPR011931">
    <property type="entry name" value="Recomb_XerC"/>
</dbReference>
<dbReference type="InterPro" id="IPR023009">
    <property type="entry name" value="Tyrosine_recombinase_XerC/XerD"/>
</dbReference>
<dbReference type="InterPro" id="IPR050090">
    <property type="entry name" value="Tyrosine_recombinase_XerCD"/>
</dbReference>
<dbReference type="NCBIfam" id="NF001399">
    <property type="entry name" value="PRK00283.1"/>
    <property type="match status" value="1"/>
</dbReference>
<dbReference type="NCBIfam" id="TIGR02224">
    <property type="entry name" value="recomb_XerC"/>
    <property type="match status" value="1"/>
</dbReference>
<dbReference type="PANTHER" id="PTHR30349">
    <property type="entry name" value="PHAGE INTEGRASE-RELATED"/>
    <property type="match status" value="1"/>
</dbReference>
<dbReference type="PANTHER" id="PTHR30349:SF81">
    <property type="entry name" value="TYROSINE RECOMBINASE XERC"/>
    <property type="match status" value="1"/>
</dbReference>
<dbReference type="Pfam" id="PF02899">
    <property type="entry name" value="Phage_int_SAM_1"/>
    <property type="match status" value="1"/>
</dbReference>
<dbReference type="Pfam" id="PF00589">
    <property type="entry name" value="Phage_integrase"/>
    <property type="match status" value="1"/>
</dbReference>
<dbReference type="SUPFAM" id="SSF56349">
    <property type="entry name" value="DNA breaking-rejoining enzymes"/>
    <property type="match status" value="1"/>
</dbReference>
<dbReference type="SUPFAM" id="SSF47823">
    <property type="entry name" value="lambda integrase-like, N-terminal domain"/>
    <property type="match status" value="1"/>
</dbReference>
<dbReference type="PROSITE" id="PS51900">
    <property type="entry name" value="CB"/>
    <property type="match status" value="1"/>
</dbReference>
<dbReference type="PROSITE" id="PS51898">
    <property type="entry name" value="TYR_RECOMBINASE"/>
    <property type="match status" value="1"/>
</dbReference>
<gene>
    <name evidence="1" type="primary">xerC</name>
    <name type="ordered locus">VIBHAR_00307</name>
</gene>
<sequence>MTTTPNTPLPNSLQKPLERFYEFLRSEKGLSLHTQRNYKQQLETMAHHLAEMGLKDWSQVDAGWVRQLAGKGMREGMKASSLATRLSSLRSFFDFLILRGEMLANPAKGVSAPRKKRPLPKNLDVDEVNQLLEVNEDDPLAVRDRAMMELMYGAGLRLAELVSVDVRDVQLRSGELRVIGKGDKERKVPFSGMATEWVGKWLRVRGDLAAPGEPALFVSKLGTRISHRSVQKRMAEWGQKQSVASHISPHKLRHSFATHMLESSNNLRAVQELLGHENISTTQIYTHLDFQHLAQAYDQAHPRARKRNDDKSD</sequence>
<protein>
    <recommendedName>
        <fullName evidence="1">Tyrosine recombinase XerC</fullName>
    </recommendedName>
</protein>
<feature type="chain" id="PRO_1000070048" description="Tyrosine recombinase XerC">
    <location>
        <begin position="1"/>
        <end position="313"/>
    </location>
</feature>
<feature type="domain" description="Core-binding (CB)" evidence="3">
    <location>
        <begin position="11"/>
        <end position="97"/>
    </location>
</feature>
<feature type="domain" description="Tyr recombinase" evidence="2">
    <location>
        <begin position="118"/>
        <end position="298"/>
    </location>
</feature>
<feature type="active site" evidence="1">
    <location>
        <position position="157"/>
    </location>
</feature>
<feature type="active site" evidence="1">
    <location>
        <position position="181"/>
    </location>
</feature>
<feature type="active site" evidence="1">
    <location>
        <position position="250"/>
    </location>
</feature>
<feature type="active site" evidence="1">
    <location>
        <position position="253"/>
    </location>
</feature>
<feature type="active site" evidence="1">
    <location>
        <position position="276"/>
    </location>
</feature>
<feature type="active site" description="O-(3'-phospho-DNA)-tyrosine intermediate" evidence="1">
    <location>
        <position position="285"/>
    </location>
</feature>
<comment type="function">
    <text evidence="1">Site-specific tyrosine recombinase, which acts by catalyzing the cutting and rejoining of the recombining DNA molecules. The XerC-XerD complex is essential to convert dimers of the bacterial chromosome into monomers to permit their segregation at cell division. It also contributes to the segregational stability of plasmids.</text>
</comment>
<comment type="subunit">
    <text evidence="1">Forms a cyclic heterotetrameric complex composed of two molecules of XerC and two molecules of XerD.</text>
</comment>
<comment type="subcellular location">
    <subcellularLocation>
        <location evidence="1">Cytoplasm</location>
    </subcellularLocation>
</comment>
<comment type="similarity">
    <text evidence="1">Belongs to the 'phage' integrase family. XerC subfamily.</text>
</comment>
<name>XERC_VIBC1</name>
<proteinExistence type="inferred from homology"/>
<keyword id="KW-0131">Cell cycle</keyword>
<keyword id="KW-0132">Cell division</keyword>
<keyword id="KW-0159">Chromosome partition</keyword>
<keyword id="KW-0963">Cytoplasm</keyword>
<keyword id="KW-0229">DNA integration</keyword>
<keyword id="KW-0233">DNA recombination</keyword>
<keyword id="KW-0238">DNA-binding</keyword>
<evidence type="ECO:0000255" key="1">
    <source>
        <dbReference type="HAMAP-Rule" id="MF_01808"/>
    </source>
</evidence>
<evidence type="ECO:0000255" key="2">
    <source>
        <dbReference type="PROSITE-ProRule" id="PRU01246"/>
    </source>
</evidence>
<evidence type="ECO:0000255" key="3">
    <source>
        <dbReference type="PROSITE-ProRule" id="PRU01248"/>
    </source>
</evidence>